<proteinExistence type="inferred from homology"/>
<keyword id="KW-0067">ATP-binding</keyword>
<keyword id="KW-0963">Cytoplasm</keyword>
<keyword id="KW-0418">Kinase</keyword>
<keyword id="KW-0460">Magnesium</keyword>
<keyword id="KW-0479">Metal-binding</keyword>
<keyword id="KW-0546">Nucleotide metabolism</keyword>
<keyword id="KW-0547">Nucleotide-binding</keyword>
<keyword id="KW-0597">Phosphoprotein</keyword>
<keyword id="KW-1185">Reference proteome</keyword>
<keyword id="KW-0808">Transferase</keyword>
<protein>
    <recommendedName>
        <fullName evidence="1">Nucleoside diphosphate kinase</fullName>
        <shortName evidence="1">NDK</shortName>
        <shortName evidence="1">NDP kinase</shortName>
        <ecNumber evidence="1">2.7.4.6</ecNumber>
    </recommendedName>
    <alternativeName>
        <fullName evidence="1">Nucleoside-2-P kinase</fullName>
    </alternativeName>
</protein>
<accession>Q81FQ4</accession>
<organism>
    <name type="scientific">Bacillus cereus (strain ATCC 14579 / DSM 31 / CCUG 7414 / JCM 2152 / NBRC 15305 / NCIMB 9373 / NCTC 2599 / NRRL B-3711)</name>
    <dbReference type="NCBI Taxonomy" id="226900"/>
    <lineage>
        <taxon>Bacteria</taxon>
        <taxon>Bacillati</taxon>
        <taxon>Bacillota</taxon>
        <taxon>Bacilli</taxon>
        <taxon>Bacillales</taxon>
        <taxon>Bacillaceae</taxon>
        <taxon>Bacillus</taxon>
        <taxon>Bacillus cereus group</taxon>
    </lineage>
</organism>
<comment type="function">
    <text evidence="1">Major role in the synthesis of nucleoside triphosphates other than ATP. The ATP gamma phosphate is transferred to the NDP beta phosphate via a ping-pong mechanism, using a phosphorylated active-site intermediate.</text>
</comment>
<comment type="catalytic activity">
    <reaction evidence="1">
        <text>a 2'-deoxyribonucleoside 5'-diphosphate + ATP = a 2'-deoxyribonucleoside 5'-triphosphate + ADP</text>
        <dbReference type="Rhea" id="RHEA:44640"/>
        <dbReference type="ChEBI" id="CHEBI:30616"/>
        <dbReference type="ChEBI" id="CHEBI:61560"/>
        <dbReference type="ChEBI" id="CHEBI:73316"/>
        <dbReference type="ChEBI" id="CHEBI:456216"/>
        <dbReference type="EC" id="2.7.4.6"/>
    </reaction>
</comment>
<comment type="catalytic activity">
    <reaction evidence="1">
        <text>a ribonucleoside 5'-diphosphate + ATP = a ribonucleoside 5'-triphosphate + ADP</text>
        <dbReference type="Rhea" id="RHEA:18113"/>
        <dbReference type="ChEBI" id="CHEBI:30616"/>
        <dbReference type="ChEBI" id="CHEBI:57930"/>
        <dbReference type="ChEBI" id="CHEBI:61557"/>
        <dbReference type="ChEBI" id="CHEBI:456216"/>
        <dbReference type="EC" id="2.7.4.6"/>
    </reaction>
</comment>
<comment type="cofactor">
    <cofactor evidence="1">
        <name>Mg(2+)</name>
        <dbReference type="ChEBI" id="CHEBI:18420"/>
    </cofactor>
</comment>
<comment type="subunit">
    <text evidence="1">Homotetramer.</text>
</comment>
<comment type="subcellular location">
    <subcellularLocation>
        <location evidence="1">Cytoplasm</location>
    </subcellularLocation>
</comment>
<comment type="similarity">
    <text evidence="1">Belongs to the NDK family.</text>
</comment>
<reference key="1">
    <citation type="journal article" date="2003" name="Nature">
        <title>Genome sequence of Bacillus cereus and comparative analysis with Bacillus anthracis.</title>
        <authorList>
            <person name="Ivanova N."/>
            <person name="Sorokin A."/>
            <person name="Anderson I."/>
            <person name="Galleron N."/>
            <person name="Candelon B."/>
            <person name="Kapatral V."/>
            <person name="Bhattacharyya A."/>
            <person name="Reznik G."/>
            <person name="Mikhailova N."/>
            <person name="Lapidus A."/>
            <person name="Chu L."/>
            <person name="Mazur M."/>
            <person name="Goltsman E."/>
            <person name="Larsen N."/>
            <person name="D'Souza M."/>
            <person name="Walunas T."/>
            <person name="Grechkin Y."/>
            <person name="Pusch G."/>
            <person name="Haselkorn R."/>
            <person name="Fonstein M."/>
            <person name="Ehrlich S.D."/>
            <person name="Overbeek R."/>
            <person name="Kyrpides N.C."/>
        </authorList>
    </citation>
    <scope>NUCLEOTIDE SEQUENCE [LARGE SCALE GENOMIC DNA]</scope>
    <source>
        <strain>ATCC 14579 / DSM 31 / CCUG 7414 / JCM 2152 / NBRC 15305 / NCIMB 9373 / NCTC 2599 / NRRL B-3711</strain>
    </source>
</reference>
<gene>
    <name evidence="1" type="primary">ndk</name>
    <name type="ordered locus">BC_1515</name>
</gene>
<name>NDK_BACCR</name>
<sequence>MEKTFLMVKPDGVQRAFIGEIVARFEKKGFQLVGAKLMQVTPEIAGQHYAEHKEKPFFGELVDFITSGPVFAMVWQGEGVVDTARNMMGKTRPHEAAPGTIRGDFGVTVAKNIIHGSDSLESAEREIAIFFKEEELVDYSKLMNEWIY</sequence>
<evidence type="ECO:0000255" key="1">
    <source>
        <dbReference type="HAMAP-Rule" id="MF_00451"/>
    </source>
</evidence>
<dbReference type="EC" id="2.7.4.6" evidence="1"/>
<dbReference type="EMBL" id="AE016877">
    <property type="protein sequence ID" value="AAP08495.1"/>
    <property type="molecule type" value="Genomic_DNA"/>
</dbReference>
<dbReference type="RefSeq" id="NP_831294.1">
    <property type="nucleotide sequence ID" value="NC_004722.1"/>
</dbReference>
<dbReference type="RefSeq" id="WP_000415883.1">
    <property type="nucleotide sequence ID" value="NZ_CP138336.1"/>
</dbReference>
<dbReference type="SMR" id="Q81FQ4"/>
<dbReference type="STRING" id="226900.BC_1515"/>
<dbReference type="GeneID" id="72448277"/>
<dbReference type="KEGG" id="bce:BC1515"/>
<dbReference type="PATRIC" id="fig|226900.8.peg.1492"/>
<dbReference type="HOGENOM" id="CLU_060216_6_3_9"/>
<dbReference type="OrthoDB" id="9801161at2"/>
<dbReference type="Proteomes" id="UP000001417">
    <property type="component" value="Chromosome"/>
</dbReference>
<dbReference type="GO" id="GO:0005737">
    <property type="term" value="C:cytoplasm"/>
    <property type="evidence" value="ECO:0007669"/>
    <property type="project" value="UniProtKB-SubCell"/>
</dbReference>
<dbReference type="GO" id="GO:0005524">
    <property type="term" value="F:ATP binding"/>
    <property type="evidence" value="ECO:0007669"/>
    <property type="project" value="UniProtKB-UniRule"/>
</dbReference>
<dbReference type="GO" id="GO:0046872">
    <property type="term" value="F:metal ion binding"/>
    <property type="evidence" value="ECO:0007669"/>
    <property type="project" value="UniProtKB-KW"/>
</dbReference>
<dbReference type="GO" id="GO:0004550">
    <property type="term" value="F:nucleoside diphosphate kinase activity"/>
    <property type="evidence" value="ECO:0007669"/>
    <property type="project" value="UniProtKB-UniRule"/>
</dbReference>
<dbReference type="GO" id="GO:0006241">
    <property type="term" value="P:CTP biosynthetic process"/>
    <property type="evidence" value="ECO:0007669"/>
    <property type="project" value="UniProtKB-UniRule"/>
</dbReference>
<dbReference type="GO" id="GO:0006183">
    <property type="term" value="P:GTP biosynthetic process"/>
    <property type="evidence" value="ECO:0007669"/>
    <property type="project" value="UniProtKB-UniRule"/>
</dbReference>
<dbReference type="GO" id="GO:0006228">
    <property type="term" value="P:UTP biosynthetic process"/>
    <property type="evidence" value="ECO:0007669"/>
    <property type="project" value="UniProtKB-UniRule"/>
</dbReference>
<dbReference type="CDD" id="cd04413">
    <property type="entry name" value="NDPk_I"/>
    <property type="match status" value="1"/>
</dbReference>
<dbReference type="FunFam" id="3.30.70.141:FF:000002">
    <property type="entry name" value="Nucleoside diphosphate kinase"/>
    <property type="match status" value="1"/>
</dbReference>
<dbReference type="Gene3D" id="3.30.70.141">
    <property type="entry name" value="Nucleoside diphosphate kinase-like domain"/>
    <property type="match status" value="1"/>
</dbReference>
<dbReference type="HAMAP" id="MF_00451">
    <property type="entry name" value="NDP_kinase"/>
    <property type="match status" value="1"/>
</dbReference>
<dbReference type="InterPro" id="IPR034907">
    <property type="entry name" value="NDK-like_dom"/>
</dbReference>
<dbReference type="InterPro" id="IPR036850">
    <property type="entry name" value="NDK-like_dom_sf"/>
</dbReference>
<dbReference type="InterPro" id="IPR001564">
    <property type="entry name" value="Nucleoside_diP_kinase"/>
</dbReference>
<dbReference type="InterPro" id="IPR023005">
    <property type="entry name" value="Nucleoside_diP_kinase_AS"/>
</dbReference>
<dbReference type="NCBIfam" id="NF001908">
    <property type="entry name" value="PRK00668.1"/>
    <property type="match status" value="1"/>
</dbReference>
<dbReference type="PANTHER" id="PTHR11349">
    <property type="entry name" value="NUCLEOSIDE DIPHOSPHATE KINASE"/>
    <property type="match status" value="1"/>
</dbReference>
<dbReference type="Pfam" id="PF00334">
    <property type="entry name" value="NDK"/>
    <property type="match status" value="1"/>
</dbReference>
<dbReference type="PRINTS" id="PR01243">
    <property type="entry name" value="NUCDPKINASE"/>
</dbReference>
<dbReference type="SMART" id="SM00562">
    <property type="entry name" value="NDK"/>
    <property type="match status" value="1"/>
</dbReference>
<dbReference type="SUPFAM" id="SSF54919">
    <property type="entry name" value="Nucleoside diphosphate kinase, NDK"/>
    <property type="match status" value="1"/>
</dbReference>
<dbReference type="PROSITE" id="PS00469">
    <property type="entry name" value="NDPK"/>
    <property type="match status" value="1"/>
</dbReference>
<dbReference type="PROSITE" id="PS51374">
    <property type="entry name" value="NDPK_LIKE"/>
    <property type="match status" value="1"/>
</dbReference>
<feature type="chain" id="PRO_0000136940" description="Nucleoside diphosphate kinase">
    <location>
        <begin position="1"/>
        <end position="148"/>
    </location>
</feature>
<feature type="active site" description="Pros-phosphohistidine intermediate" evidence="1">
    <location>
        <position position="115"/>
    </location>
</feature>
<feature type="binding site" evidence="1">
    <location>
        <position position="9"/>
    </location>
    <ligand>
        <name>ATP</name>
        <dbReference type="ChEBI" id="CHEBI:30616"/>
    </ligand>
</feature>
<feature type="binding site" evidence="1">
    <location>
        <position position="57"/>
    </location>
    <ligand>
        <name>ATP</name>
        <dbReference type="ChEBI" id="CHEBI:30616"/>
    </ligand>
</feature>
<feature type="binding site" evidence="1">
    <location>
        <position position="85"/>
    </location>
    <ligand>
        <name>ATP</name>
        <dbReference type="ChEBI" id="CHEBI:30616"/>
    </ligand>
</feature>
<feature type="binding site" evidence="1">
    <location>
        <position position="91"/>
    </location>
    <ligand>
        <name>ATP</name>
        <dbReference type="ChEBI" id="CHEBI:30616"/>
    </ligand>
</feature>
<feature type="binding site" evidence="1">
    <location>
        <position position="102"/>
    </location>
    <ligand>
        <name>ATP</name>
        <dbReference type="ChEBI" id="CHEBI:30616"/>
    </ligand>
</feature>
<feature type="binding site" evidence="1">
    <location>
        <position position="112"/>
    </location>
    <ligand>
        <name>ATP</name>
        <dbReference type="ChEBI" id="CHEBI:30616"/>
    </ligand>
</feature>
<feature type="modified residue" description="Phosphothreonine" evidence="1">
    <location>
        <position position="91"/>
    </location>
</feature>
<feature type="modified residue" description="Phosphoserine" evidence="1">
    <location>
        <position position="122"/>
    </location>
</feature>